<dbReference type="EC" id="1.11.1.24" evidence="1"/>
<dbReference type="EMBL" id="U34251">
    <property type="protein sequence ID" value="AAC23701.1"/>
    <property type="molecule type" value="mRNA"/>
</dbReference>
<dbReference type="SMR" id="P48822"/>
<dbReference type="FunCoup" id="P48822">
    <property type="interactions" value="396"/>
</dbReference>
<dbReference type="STRING" id="6279.P48822"/>
<dbReference type="WormBase" id="Bm13772">
    <property type="protein sequence ID" value="BM45456"/>
    <property type="gene ID" value="WBGene00234033"/>
    <property type="gene designation" value="Bma-prdx-3.3"/>
</dbReference>
<dbReference type="InParanoid" id="P48822"/>
<dbReference type="Proteomes" id="UP000006672">
    <property type="component" value="Unassembled WGS sequence"/>
</dbReference>
<dbReference type="GO" id="GO:0005829">
    <property type="term" value="C:cytosol"/>
    <property type="evidence" value="ECO:0007669"/>
    <property type="project" value="TreeGrafter"/>
</dbReference>
<dbReference type="GO" id="GO:0005739">
    <property type="term" value="C:mitochondrion"/>
    <property type="evidence" value="ECO:0007669"/>
    <property type="project" value="TreeGrafter"/>
</dbReference>
<dbReference type="GO" id="GO:0008379">
    <property type="term" value="F:thioredoxin peroxidase activity"/>
    <property type="evidence" value="ECO:0007669"/>
    <property type="project" value="TreeGrafter"/>
</dbReference>
<dbReference type="GO" id="GO:0045454">
    <property type="term" value="P:cell redox homeostasis"/>
    <property type="evidence" value="ECO:0007669"/>
    <property type="project" value="TreeGrafter"/>
</dbReference>
<dbReference type="GO" id="GO:0033554">
    <property type="term" value="P:cellular response to stress"/>
    <property type="evidence" value="ECO:0007669"/>
    <property type="project" value="TreeGrafter"/>
</dbReference>
<dbReference type="GO" id="GO:0042744">
    <property type="term" value="P:hydrogen peroxide catabolic process"/>
    <property type="evidence" value="ECO:0007669"/>
    <property type="project" value="TreeGrafter"/>
</dbReference>
<dbReference type="GO" id="GO:0006979">
    <property type="term" value="P:response to oxidative stress"/>
    <property type="evidence" value="ECO:0007669"/>
    <property type="project" value="TreeGrafter"/>
</dbReference>
<dbReference type="CDD" id="cd03015">
    <property type="entry name" value="PRX_Typ2cys"/>
    <property type="match status" value="1"/>
</dbReference>
<dbReference type="FunFam" id="3.40.30.10:FF:000003">
    <property type="entry name" value="Peroxiredoxin 1"/>
    <property type="match status" value="1"/>
</dbReference>
<dbReference type="Gene3D" id="3.40.30.10">
    <property type="entry name" value="Glutaredoxin"/>
    <property type="match status" value="1"/>
</dbReference>
<dbReference type="InterPro" id="IPR000866">
    <property type="entry name" value="AhpC/TSA"/>
</dbReference>
<dbReference type="InterPro" id="IPR050217">
    <property type="entry name" value="Peroxiredoxin"/>
</dbReference>
<dbReference type="InterPro" id="IPR024706">
    <property type="entry name" value="Peroxiredoxin_AhpC-typ"/>
</dbReference>
<dbReference type="InterPro" id="IPR019479">
    <property type="entry name" value="Peroxiredoxin_C"/>
</dbReference>
<dbReference type="InterPro" id="IPR036249">
    <property type="entry name" value="Thioredoxin-like_sf"/>
</dbReference>
<dbReference type="InterPro" id="IPR013766">
    <property type="entry name" value="Thioredoxin_domain"/>
</dbReference>
<dbReference type="PANTHER" id="PTHR10681">
    <property type="entry name" value="THIOREDOXIN PEROXIDASE"/>
    <property type="match status" value="1"/>
</dbReference>
<dbReference type="PANTHER" id="PTHR10681:SF128">
    <property type="entry name" value="THIOREDOXIN-DEPENDENT PEROXIDE REDUCTASE, MITOCHONDRIAL"/>
    <property type="match status" value="1"/>
</dbReference>
<dbReference type="Pfam" id="PF10417">
    <property type="entry name" value="1-cysPrx_C"/>
    <property type="match status" value="1"/>
</dbReference>
<dbReference type="Pfam" id="PF00578">
    <property type="entry name" value="AhpC-TSA"/>
    <property type="match status" value="1"/>
</dbReference>
<dbReference type="PIRSF" id="PIRSF000239">
    <property type="entry name" value="AHPC"/>
    <property type="match status" value="1"/>
</dbReference>
<dbReference type="SUPFAM" id="SSF52833">
    <property type="entry name" value="Thioredoxin-like"/>
    <property type="match status" value="1"/>
</dbReference>
<dbReference type="PROSITE" id="PS51352">
    <property type="entry name" value="THIOREDOXIN_2"/>
    <property type="match status" value="1"/>
</dbReference>
<proteinExistence type="evidence at transcript level"/>
<accession>P48822</accession>
<reference key="1">
    <citation type="journal article" date="1998" name="Mol. Biochem. Parasitol.">
        <title>Thioredoxin peroxidases from Brugia malayi.</title>
        <authorList>
            <person name="Ghosh I."/>
            <person name="Eisinger S.W."/>
            <person name="Raghavan N."/>
            <person name="Scott A.L."/>
        </authorList>
    </citation>
    <scope>NUCLEOTIDE SEQUENCE [MRNA]</scope>
</reference>
<protein>
    <recommendedName>
        <fullName>Peroxiredoxin 1</fullName>
        <ecNumber evidence="1">1.11.1.24</ecNumber>
    </recommendedName>
    <alternativeName>
        <fullName>Thiol-specific antioxidant protein 1</fullName>
    </alternativeName>
    <alternativeName>
        <fullName>Thioredoxin peroxidase 1</fullName>
        <shortName>Bm-TPx-1</shortName>
    </alternativeName>
    <alternativeName>
        <fullName>Thioredoxin-dependent peroxide reductase 1</fullName>
    </alternativeName>
    <alternativeName>
        <fullName evidence="3">Thioredoxin-dependent peroxiredoxin 1</fullName>
    </alternativeName>
</protein>
<evidence type="ECO:0000250" key="1">
    <source>
        <dbReference type="UniProtKB" id="Q06830"/>
    </source>
</evidence>
<evidence type="ECO:0000255" key="2">
    <source>
        <dbReference type="PROSITE-ProRule" id="PRU00691"/>
    </source>
</evidence>
<evidence type="ECO:0000305" key="3"/>
<gene>
    <name type="primary">TSA1</name>
</gene>
<feature type="chain" id="PRO_0000135089" description="Peroxiredoxin 1">
    <location>
        <begin position="1"/>
        <end position="229"/>
    </location>
</feature>
<feature type="domain" description="Thioredoxin" evidence="2">
    <location>
        <begin position="33"/>
        <end position="192"/>
    </location>
</feature>
<feature type="active site" description="Cysteine sulfenic acid (-SOH) intermediate" evidence="1">
    <location>
        <position position="78"/>
    </location>
</feature>
<feature type="disulfide bond" description="Interchain (with C-200); in linked form" evidence="1">
    <location>
        <position position="78"/>
    </location>
</feature>
<feature type="disulfide bond" description="Interchain (with C-78); in linked form" evidence="1">
    <location>
        <position position="200"/>
    </location>
</feature>
<keyword id="KW-0049">Antioxidant</keyword>
<keyword id="KW-1015">Disulfide bond</keyword>
<keyword id="KW-0560">Oxidoreductase</keyword>
<keyword id="KW-0575">Peroxidase</keyword>
<keyword id="KW-0676">Redox-active center</keyword>
<keyword id="KW-1185">Reference proteome</keyword>
<name>TDX1_BRUMA</name>
<organism>
    <name type="scientific">Brugia malayi</name>
    <name type="common">Filarial nematode worm</name>
    <dbReference type="NCBI Taxonomy" id="6279"/>
    <lineage>
        <taxon>Eukaryota</taxon>
        <taxon>Metazoa</taxon>
        <taxon>Ecdysozoa</taxon>
        <taxon>Nematoda</taxon>
        <taxon>Chromadorea</taxon>
        <taxon>Rhabditida</taxon>
        <taxon>Spirurina</taxon>
        <taxon>Spiruromorpha</taxon>
        <taxon>Filarioidea</taxon>
        <taxon>Onchocercidae</taxon>
        <taxon>Brugia</taxon>
    </lineage>
</organism>
<sequence length="229" mass="25367">MIRSVLASVSPLRQILASQLCTSSITLAGIRPLGPKNKAPDFSGTAVVNGDFKTISMKDYKGKWLILFFYPLDFTFVCPTEITAFSDRCAEFQKLNTELIACSCDSHFSHLAWIQTPRSEVGGLGDMKIPVLADFNKDIANAFGVLDHETGISYRGLFLIDPSGEIRHSLVNDLSVGRSVDEAFRTLKAFQFVEKHGEVCPANWSDDKPTIKPGIKESKEYFKKVDGHT</sequence>
<comment type="function">
    <text evidence="1">Thiol-specific peroxidase that catalyzes the reduction of hydrogen peroxide and organic hydroperoxides to water and alcohols, respectively. Plays a role in cell protection against oxidative stress by detoxifying peroxides and as sensor of hydrogen peroxide-mediated signaling events.</text>
</comment>
<comment type="catalytic activity">
    <reaction evidence="1">
        <text>a hydroperoxide + [thioredoxin]-dithiol = an alcohol + [thioredoxin]-disulfide + H2O</text>
        <dbReference type="Rhea" id="RHEA:62620"/>
        <dbReference type="Rhea" id="RHEA-COMP:10698"/>
        <dbReference type="Rhea" id="RHEA-COMP:10700"/>
        <dbReference type="ChEBI" id="CHEBI:15377"/>
        <dbReference type="ChEBI" id="CHEBI:29950"/>
        <dbReference type="ChEBI" id="CHEBI:30879"/>
        <dbReference type="ChEBI" id="CHEBI:35924"/>
        <dbReference type="ChEBI" id="CHEBI:50058"/>
        <dbReference type="EC" id="1.11.1.24"/>
    </reaction>
</comment>
<comment type="subunit">
    <text evidence="1">Homodimer; disulfide-linked, upon oxidation.</text>
</comment>
<comment type="miscellaneous">
    <text evidence="1">The active site is a conserved redox-active cysteine residue, the peroxidatic cysteine (C(P)), which makes the nucleophilic attack on the peroxide substrate. The peroxide oxidizes the C(P)-SH to cysteine sulfenic acid (C(P)-SOH), which then reacts with another cysteine residue, the resolving cysteine (C(R)), to form a disulfide bridge. The disulfide is subsequently reduced by an appropriate electron donor to complete the catalytic cycle. In this typical 2-Cys peroxiredoxin, C(R) is provided by the other dimeric subunit to form an intersubunit disulfide. The disulfide is subsequently reduced by thioredoxin.</text>
</comment>
<comment type="similarity">
    <text evidence="3">Belongs to the peroxiredoxin family. AhpC/Prx1 subfamily.</text>
</comment>